<name>I1BC_CONRA</name>
<keyword id="KW-0165">Cleavage on pair of basic residues</keyword>
<keyword id="KW-0208">D-amino acid</keyword>
<keyword id="KW-0903">Direct protein sequencing</keyword>
<keyword id="KW-1015">Disulfide bond</keyword>
<keyword id="KW-0379">Hydroxylation</keyword>
<keyword id="KW-0872">Ion channel impairing toxin</keyword>
<keyword id="KW-0528">Neurotoxin</keyword>
<keyword id="KW-0964">Secreted</keyword>
<keyword id="KW-0732">Signal</keyword>
<keyword id="KW-0800">Toxin</keyword>
<keyword id="KW-0738">Voltage-gated sodium channel impairing toxin</keyword>
<comment type="function">
    <text evidence="1">Iota-conotoxins bind to voltage-gated sodium channels (Nav) and act as agonists by shifting the voltage-dependence of activation to more hyperpolarized levels (By similarity). Causes circular motion, convulsions, copious urination, rigid paralysis and death upon intracranial injection into mice. Causes unbalanced swimming, swimming in diagonal and vertical motion and death, when injected intraperitoneally into goldfish. L-Leu and D-Leu forms are active on both nerve and muscle.</text>
</comment>
<comment type="subcellular location">
    <subcellularLocation>
        <location>Secreted</location>
    </subcellularLocation>
</comment>
<comment type="tissue specificity">
    <text>Expressed by the venom duct.</text>
</comment>
<comment type="domain">
    <text>The cysteine framework is XI (C-C-CC-CC-C-C).</text>
</comment>
<comment type="PTM">
    <text>The natural D-Leu form of the peptide is more potent than the synthetic L-Leu form.</text>
</comment>
<comment type="mass spectrometry">
    <text>With hydroxyPro.</text>
</comment>
<comment type="mass spectrometry"/>
<comment type="similarity">
    <text evidence="6">Belongs to the conotoxin I1 superfamily.</text>
</comment>
<organism>
    <name type="scientific">Conus radiatus</name>
    <name type="common">Rayed cone</name>
    <dbReference type="NCBI Taxonomy" id="61198"/>
    <lineage>
        <taxon>Eukaryota</taxon>
        <taxon>Metazoa</taxon>
        <taxon>Spiralia</taxon>
        <taxon>Lophotrochozoa</taxon>
        <taxon>Mollusca</taxon>
        <taxon>Gastropoda</taxon>
        <taxon>Caenogastropoda</taxon>
        <taxon>Neogastropoda</taxon>
        <taxon>Conoidea</taxon>
        <taxon>Conidae</taxon>
        <taxon>Conus</taxon>
        <taxon>Phasmoconus</taxon>
    </lineage>
</organism>
<dbReference type="EMBL" id="AY208957">
    <property type="protein sequence ID" value="AAP41539.1"/>
    <property type="molecule type" value="mRNA"/>
</dbReference>
<dbReference type="SMR" id="Q7Z096"/>
<dbReference type="ConoServer" id="1409">
    <property type="toxin name" value="RXIC precursor"/>
</dbReference>
<dbReference type="GO" id="GO:0005576">
    <property type="term" value="C:extracellular region"/>
    <property type="evidence" value="ECO:0007669"/>
    <property type="project" value="UniProtKB-SubCell"/>
</dbReference>
<dbReference type="GO" id="GO:0017080">
    <property type="term" value="F:sodium channel regulator activity"/>
    <property type="evidence" value="ECO:0007669"/>
    <property type="project" value="UniProtKB-KW"/>
</dbReference>
<dbReference type="GO" id="GO:0090729">
    <property type="term" value="F:toxin activity"/>
    <property type="evidence" value="ECO:0007669"/>
    <property type="project" value="UniProtKB-KW"/>
</dbReference>
<dbReference type="Gene3D" id="4.10.40.80">
    <property type="match status" value="1"/>
</dbReference>
<dbReference type="InterPro" id="IPR013141">
    <property type="entry name" value="Conotoxin-I_CS"/>
</dbReference>
<dbReference type="InterPro" id="IPR012624">
    <property type="entry name" value="Toxin_19"/>
</dbReference>
<dbReference type="Pfam" id="PF08088">
    <property type="entry name" value="Toxin_19"/>
    <property type="match status" value="1"/>
</dbReference>
<dbReference type="PROSITE" id="PS60019">
    <property type="entry name" value="I_CONOTOXIN"/>
    <property type="match status" value="1"/>
</dbReference>
<evidence type="ECO:0000250" key="1"/>
<evidence type="ECO:0000250" key="2">
    <source>
        <dbReference type="UniProtKB" id="Q7Z094"/>
    </source>
</evidence>
<evidence type="ECO:0000255" key="3"/>
<evidence type="ECO:0000269" key="4">
    <source>
    </source>
</evidence>
<evidence type="ECO:0000269" key="5">
    <source>
    </source>
</evidence>
<evidence type="ECO:0000305" key="6"/>
<feature type="signal peptide" evidence="3">
    <location>
        <begin position="1"/>
        <end position="19"/>
    </location>
</feature>
<feature type="propeptide" id="PRO_0000262448">
    <location>
        <begin position="20"/>
        <end position="35"/>
    </location>
</feature>
<feature type="chain" id="PRO_0000035100" description="Iota-conotoxin-like r11c">
    <location>
        <begin position="37"/>
        <end position="79"/>
    </location>
</feature>
<feature type="propeptide" id="PRO_0000035101" description="Removed by a carboxypeptidase">
    <location>
        <position position="80"/>
    </location>
</feature>
<feature type="modified residue" description="4-hydroxyproline; partial" evidence="4">
    <location>
        <position position="38"/>
    </location>
</feature>
<feature type="modified residue" description="4-hydroxyproline; partial" evidence="4">
    <location>
        <position position="47"/>
    </location>
</feature>
<feature type="modified residue" description="4-hydroxyproline" evidence="4">
    <location>
        <position position="65"/>
    </location>
</feature>
<feature type="modified residue" description="D-leucine" evidence="5">
    <location>
        <position position="78"/>
    </location>
</feature>
<feature type="disulfide bond" evidence="2">
    <location>
        <begin position="41"/>
        <end position="55"/>
    </location>
</feature>
<feature type="disulfide bond" evidence="2">
    <location>
        <begin position="48"/>
        <end position="58"/>
    </location>
</feature>
<feature type="disulfide bond" evidence="2">
    <location>
        <begin position="54"/>
        <end position="63"/>
    </location>
</feature>
<feature type="disulfide bond" evidence="2">
    <location>
        <begin position="57"/>
        <end position="72"/>
    </location>
</feature>
<reference key="1">
    <citation type="journal article" date="2005" name="FEBS J.">
        <title>Characterization of D-amino-acid-containing excitatory conotoxins and redefinition of the I-conotoxin superfamily.</title>
        <authorList>
            <person name="Buczek O."/>
            <person name="Yoshikami D."/>
            <person name="Watkins M."/>
            <person name="Bulaj G."/>
            <person name="Jimenez E.C."/>
            <person name="Olivera B.M."/>
        </authorList>
    </citation>
    <scope>NUCLEOTIDE SEQUENCE [MRNA]</scope>
    <scope>SYNTHESIS OF 37-79</scope>
    <scope>D-AMINO ACID AT LEU-78</scope>
    <source>
        <tissue>Venom</tissue>
        <tissue>Venom duct</tissue>
    </source>
</reference>
<reference key="2">
    <citation type="journal article" date="2003" name="J. Neurochem.">
        <title>Novel excitatory Conus peptides define a new conotoxin superfamily.</title>
        <authorList>
            <person name="Jimenez E.C."/>
            <person name="Shetty R.P."/>
            <person name="Lirazan M."/>
            <person name="Rivier J."/>
            <person name="Walker C."/>
            <person name="Abogadie F.C."/>
            <person name="Yoshikami D."/>
            <person name="Cruz L.J."/>
            <person name="Olivera B.M."/>
        </authorList>
    </citation>
    <scope>NUCLEOTIDE SEQUENCE [MRNA] OF 37-80</scope>
    <scope>PROTEIN SEQUENCE OF 37-79</scope>
    <scope>HYDROXYLATION AT PRO-38; PRO-47 AND PRO-65</scope>
    <scope>MASS SPECTROMETRY</scope>
    <source>
        <tissue>Venom</tissue>
        <tissue>Venom duct</tissue>
    </source>
</reference>
<reference key="3">
    <citation type="journal article" date="2005" name="FEBS J.">
        <authorList>
            <person name="Buczek O."/>
            <person name="Yoshikami D."/>
            <person name="Watkins M."/>
            <person name="Bulaj G."/>
            <person name="Jimenez E.C."/>
            <person name="Olivera B.M."/>
        </authorList>
    </citation>
    <scope>ERRATUM OF PUBMED:12694387</scope>
</reference>
<protein>
    <recommendedName>
        <fullName>Iota-conotoxin-like r11c</fullName>
    </recommendedName>
    <alternativeName>
        <fullName>R11.4</fullName>
    </alternativeName>
</protein>
<sequence>MKLCLTFLLVLMILASVTGEKSSKHTLSRAARVKNRGPSFCKADEKPCKYHADCCNCCLGGICKPSTSWIGCSTNVFLTR</sequence>
<accession>Q7Z096</accession>
<proteinExistence type="evidence at protein level"/>